<proteinExistence type="inferred from homology"/>
<dbReference type="EMBL" id="CP000468">
    <property type="protein sequence ID" value="ABJ03208.1"/>
    <property type="molecule type" value="Genomic_DNA"/>
</dbReference>
<dbReference type="RefSeq" id="WP_000135618.1">
    <property type="nucleotide sequence ID" value="NZ_CADILS010000011.1"/>
</dbReference>
<dbReference type="BMRB" id="A1AHR8"/>
<dbReference type="SMR" id="A1AHR8"/>
<dbReference type="GeneID" id="86948620"/>
<dbReference type="KEGG" id="ecv:APECO1_2725"/>
<dbReference type="HOGENOM" id="CLU_041018_1_0_6"/>
<dbReference type="Proteomes" id="UP000008216">
    <property type="component" value="Chromosome"/>
</dbReference>
<dbReference type="GO" id="GO:0005886">
    <property type="term" value="C:plasma membrane"/>
    <property type="evidence" value="ECO:0007669"/>
    <property type="project" value="UniProtKB-SubCell"/>
</dbReference>
<dbReference type="GO" id="GO:0045259">
    <property type="term" value="C:proton-transporting ATP synthase complex"/>
    <property type="evidence" value="ECO:0007669"/>
    <property type="project" value="UniProtKB-KW"/>
</dbReference>
<dbReference type="GO" id="GO:0046933">
    <property type="term" value="F:proton-transporting ATP synthase activity, rotational mechanism"/>
    <property type="evidence" value="ECO:0007669"/>
    <property type="project" value="UniProtKB-UniRule"/>
</dbReference>
<dbReference type="GO" id="GO:0042777">
    <property type="term" value="P:proton motive force-driven plasma membrane ATP synthesis"/>
    <property type="evidence" value="ECO:0007669"/>
    <property type="project" value="TreeGrafter"/>
</dbReference>
<dbReference type="CDD" id="cd00310">
    <property type="entry name" value="ATP-synt_Fo_a_6"/>
    <property type="match status" value="1"/>
</dbReference>
<dbReference type="FunFam" id="1.20.120.220:FF:000002">
    <property type="entry name" value="ATP synthase subunit a"/>
    <property type="match status" value="1"/>
</dbReference>
<dbReference type="Gene3D" id="1.20.120.220">
    <property type="entry name" value="ATP synthase, F0 complex, subunit A"/>
    <property type="match status" value="1"/>
</dbReference>
<dbReference type="HAMAP" id="MF_01393">
    <property type="entry name" value="ATP_synth_a_bact"/>
    <property type="match status" value="1"/>
</dbReference>
<dbReference type="InterPro" id="IPR045082">
    <property type="entry name" value="ATP_syn_F0_a_bact/chloroplast"/>
</dbReference>
<dbReference type="InterPro" id="IPR000568">
    <property type="entry name" value="ATP_synth_F0_asu"/>
</dbReference>
<dbReference type="InterPro" id="IPR023011">
    <property type="entry name" value="ATP_synth_F0_asu_AS"/>
</dbReference>
<dbReference type="InterPro" id="IPR035908">
    <property type="entry name" value="F0_ATP_A_sf"/>
</dbReference>
<dbReference type="NCBIfam" id="TIGR01131">
    <property type="entry name" value="ATP_synt_6_or_A"/>
    <property type="match status" value="1"/>
</dbReference>
<dbReference type="NCBIfam" id="NF004477">
    <property type="entry name" value="PRK05815.1-1"/>
    <property type="match status" value="1"/>
</dbReference>
<dbReference type="PANTHER" id="PTHR42823">
    <property type="entry name" value="ATP SYNTHASE SUBUNIT A, CHLOROPLASTIC"/>
    <property type="match status" value="1"/>
</dbReference>
<dbReference type="PANTHER" id="PTHR42823:SF3">
    <property type="entry name" value="ATP SYNTHASE SUBUNIT A, CHLOROPLASTIC"/>
    <property type="match status" value="1"/>
</dbReference>
<dbReference type="Pfam" id="PF00119">
    <property type="entry name" value="ATP-synt_A"/>
    <property type="match status" value="1"/>
</dbReference>
<dbReference type="PRINTS" id="PR00123">
    <property type="entry name" value="ATPASEA"/>
</dbReference>
<dbReference type="SUPFAM" id="SSF81336">
    <property type="entry name" value="F1F0 ATP synthase subunit A"/>
    <property type="match status" value="1"/>
</dbReference>
<dbReference type="PROSITE" id="PS00449">
    <property type="entry name" value="ATPASE_A"/>
    <property type="match status" value="1"/>
</dbReference>
<name>ATP6_ECOK1</name>
<keyword id="KW-0066">ATP synthesis</keyword>
<keyword id="KW-0997">Cell inner membrane</keyword>
<keyword id="KW-1003">Cell membrane</keyword>
<keyword id="KW-0138">CF(0)</keyword>
<keyword id="KW-0375">Hydrogen ion transport</keyword>
<keyword id="KW-0406">Ion transport</keyword>
<keyword id="KW-0472">Membrane</keyword>
<keyword id="KW-1185">Reference proteome</keyword>
<keyword id="KW-0812">Transmembrane</keyword>
<keyword id="KW-1133">Transmembrane helix</keyword>
<keyword id="KW-0813">Transport</keyword>
<reference key="1">
    <citation type="journal article" date="2007" name="J. Bacteriol.">
        <title>The genome sequence of avian pathogenic Escherichia coli strain O1:K1:H7 shares strong similarities with human extraintestinal pathogenic E. coli genomes.</title>
        <authorList>
            <person name="Johnson T.J."/>
            <person name="Kariyawasam S."/>
            <person name="Wannemuehler Y."/>
            <person name="Mangiamele P."/>
            <person name="Johnson S.J."/>
            <person name="Doetkott C."/>
            <person name="Skyberg J.A."/>
            <person name="Lynne A.M."/>
            <person name="Johnson J.R."/>
            <person name="Nolan L.K."/>
        </authorList>
    </citation>
    <scope>NUCLEOTIDE SEQUENCE [LARGE SCALE GENOMIC DNA]</scope>
</reference>
<sequence length="271" mass="30312">MASENMTPQDYIGHHLNNLQLDLRTFSLVDPHNPPATFWTINIDSMFFSVVLGLLFLVLFRSVAKKATSGVPGKFQTAIELVIGFVNGSVKDMYHGKSKLIAPLALTIFVWVFLMNLMDLLPIDLLPYIAEHVLGLPALRVVPSADVNVTLSMALGVFILILFYSIKMKGIGGFTKELTLQPFNHWAFIPVNLILEGVSLLSKPVSLGLRLFGNMYAGELIFILIAGLLPWWSQWILNVPWAIFHILIITLQAFIFMVLTIVYLSMASEEH</sequence>
<feature type="chain" id="PRO_0000362304" description="ATP synthase subunit a">
    <location>
        <begin position="1"/>
        <end position="271"/>
    </location>
</feature>
<feature type="transmembrane region" description="Helical" evidence="1">
    <location>
        <begin position="40"/>
        <end position="60"/>
    </location>
</feature>
<feature type="transmembrane region" description="Helical" evidence="1">
    <location>
        <begin position="100"/>
        <end position="120"/>
    </location>
</feature>
<feature type="transmembrane region" description="Helical" evidence="1">
    <location>
        <begin position="146"/>
        <end position="166"/>
    </location>
</feature>
<feature type="transmembrane region" description="Helical" evidence="1">
    <location>
        <begin position="220"/>
        <end position="240"/>
    </location>
</feature>
<feature type="transmembrane region" description="Helical" evidence="1">
    <location>
        <begin position="242"/>
        <end position="262"/>
    </location>
</feature>
<organism>
    <name type="scientific">Escherichia coli O1:K1 / APEC</name>
    <dbReference type="NCBI Taxonomy" id="405955"/>
    <lineage>
        <taxon>Bacteria</taxon>
        <taxon>Pseudomonadati</taxon>
        <taxon>Pseudomonadota</taxon>
        <taxon>Gammaproteobacteria</taxon>
        <taxon>Enterobacterales</taxon>
        <taxon>Enterobacteriaceae</taxon>
        <taxon>Escherichia</taxon>
    </lineage>
</organism>
<gene>
    <name evidence="1" type="primary">atpB</name>
    <name type="ordered locus">Ecok1_37140</name>
    <name type="ORF">APECO1_2725</name>
</gene>
<protein>
    <recommendedName>
        <fullName evidence="1">ATP synthase subunit a</fullName>
    </recommendedName>
    <alternativeName>
        <fullName evidence="1">ATP synthase F0 sector subunit a</fullName>
    </alternativeName>
    <alternativeName>
        <fullName evidence="1">F-ATPase subunit 6</fullName>
    </alternativeName>
</protein>
<comment type="function">
    <text evidence="1">Key component of the proton channel; it plays a direct role in the translocation of protons across the membrane.</text>
</comment>
<comment type="subunit">
    <text evidence="1">F-type ATPases have 2 components, CF(1) - the catalytic core - and CF(0) - the membrane proton channel. CF(1) has five subunits: alpha(3), beta(3), gamma(1), delta(1), epsilon(1). CF(0) has three main subunits: a(1), b(2) and c(9-12). The alpha and beta chains form an alternating ring which encloses part of the gamma chain. CF(1) is attached to CF(0) by a central stalk formed by the gamma and epsilon chains, while a peripheral stalk is formed by the delta and b chains.</text>
</comment>
<comment type="subcellular location">
    <subcellularLocation>
        <location evidence="1">Cell inner membrane</location>
        <topology evidence="1">Multi-pass membrane protein</topology>
    </subcellularLocation>
</comment>
<comment type="similarity">
    <text evidence="1">Belongs to the ATPase A chain family.</text>
</comment>
<evidence type="ECO:0000255" key="1">
    <source>
        <dbReference type="HAMAP-Rule" id="MF_01393"/>
    </source>
</evidence>
<accession>A1AHR8</accession>